<proteinExistence type="inferred from homology"/>
<name>MURB_CLOB8</name>
<gene>
    <name evidence="1" type="primary">murB</name>
    <name type="ordered locus">Cbei_4858</name>
</gene>
<keyword id="KW-0131">Cell cycle</keyword>
<keyword id="KW-0132">Cell division</keyword>
<keyword id="KW-0133">Cell shape</keyword>
<keyword id="KW-0961">Cell wall biogenesis/degradation</keyword>
<keyword id="KW-0963">Cytoplasm</keyword>
<keyword id="KW-0274">FAD</keyword>
<keyword id="KW-0285">Flavoprotein</keyword>
<keyword id="KW-0521">NADP</keyword>
<keyword id="KW-0560">Oxidoreductase</keyword>
<keyword id="KW-0573">Peptidoglycan synthesis</keyword>
<sequence>MKHYGEYKNLFSKLYEESQIQLDAKMSEHIYFKVGGPVDILLTPNSIQQVKETITICKENNIPFYVIGNGSNILVKDGGIRGVVIKLCELNKIECIGNKIIAECGALLKDVSKAATEGSLAGFQFACGIPGSVGGAVFMNAGAYDGEISFVIESAEVLDDNQEIRIIPKSELNLGYRQSVVMQKGYIVLRATFNLVNGDKEKIQARVDELTKRREERQPLEYPSAGSTFKRPEGYFAGKLIEDAGLKGFAIGGACVSEKHAGFVINCKNGTAKDVLDVIYHVRDEVKKQFGVDLYPEVRIWGED</sequence>
<protein>
    <recommendedName>
        <fullName evidence="1">UDP-N-acetylenolpyruvoylglucosamine reductase</fullName>
        <ecNumber evidence="1">1.3.1.98</ecNumber>
    </recommendedName>
    <alternativeName>
        <fullName evidence="1">UDP-N-acetylmuramate dehydrogenase</fullName>
    </alternativeName>
</protein>
<evidence type="ECO:0000255" key="1">
    <source>
        <dbReference type="HAMAP-Rule" id="MF_00037"/>
    </source>
</evidence>
<feature type="chain" id="PRO_1000074519" description="UDP-N-acetylenolpyruvoylglucosamine reductase">
    <location>
        <begin position="1"/>
        <end position="304"/>
    </location>
</feature>
<feature type="domain" description="FAD-binding PCMH-type" evidence="1">
    <location>
        <begin position="33"/>
        <end position="198"/>
    </location>
</feature>
<feature type="active site" evidence="1">
    <location>
        <position position="177"/>
    </location>
</feature>
<feature type="active site" description="Proton donor" evidence="1">
    <location>
        <position position="227"/>
    </location>
</feature>
<feature type="active site" evidence="1">
    <location>
        <position position="297"/>
    </location>
</feature>
<comment type="function">
    <text evidence="1">Cell wall formation.</text>
</comment>
<comment type="catalytic activity">
    <reaction evidence="1">
        <text>UDP-N-acetyl-alpha-D-muramate + NADP(+) = UDP-N-acetyl-3-O-(1-carboxyvinyl)-alpha-D-glucosamine + NADPH + H(+)</text>
        <dbReference type="Rhea" id="RHEA:12248"/>
        <dbReference type="ChEBI" id="CHEBI:15378"/>
        <dbReference type="ChEBI" id="CHEBI:57783"/>
        <dbReference type="ChEBI" id="CHEBI:58349"/>
        <dbReference type="ChEBI" id="CHEBI:68483"/>
        <dbReference type="ChEBI" id="CHEBI:70757"/>
        <dbReference type="EC" id="1.3.1.98"/>
    </reaction>
</comment>
<comment type="cofactor">
    <cofactor evidence="1">
        <name>FAD</name>
        <dbReference type="ChEBI" id="CHEBI:57692"/>
    </cofactor>
</comment>
<comment type="pathway">
    <text evidence="1">Cell wall biogenesis; peptidoglycan biosynthesis.</text>
</comment>
<comment type="subcellular location">
    <subcellularLocation>
        <location evidence="1">Cytoplasm</location>
    </subcellularLocation>
</comment>
<comment type="similarity">
    <text evidence="1">Belongs to the MurB family.</text>
</comment>
<accession>A6M2Y4</accession>
<reference key="1">
    <citation type="submission" date="2007-06" db="EMBL/GenBank/DDBJ databases">
        <title>Complete sequence of Clostridium beijerinckii NCIMB 8052.</title>
        <authorList>
            <consortium name="US DOE Joint Genome Institute"/>
            <person name="Copeland A."/>
            <person name="Lucas S."/>
            <person name="Lapidus A."/>
            <person name="Barry K."/>
            <person name="Detter J.C."/>
            <person name="Glavina del Rio T."/>
            <person name="Hammon N."/>
            <person name="Israni S."/>
            <person name="Dalin E."/>
            <person name="Tice H."/>
            <person name="Pitluck S."/>
            <person name="Sims D."/>
            <person name="Brettin T."/>
            <person name="Bruce D."/>
            <person name="Tapia R."/>
            <person name="Brainard J."/>
            <person name="Schmutz J."/>
            <person name="Larimer F."/>
            <person name="Land M."/>
            <person name="Hauser L."/>
            <person name="Kyrpides N."/>
            <person name="Mikhailova N."/>
            <person name="Bennet G."/>
            <person name="Cann I."/>
            <person name="Chen J.-S."/>
            <person name="Contreras A.L."/>
            <person name="Jones D."/>
            <person name="Kashket E."/>
            <person name="Mitchell W."/>
            <person name="Stoddard S."/>
            <person name="Schwarz W."/>
            <person name="Qureshi N."/>
            <person name="Young M."/>
            <person name="Shi Z."/>
            <person name="Ezeji T."/>
            <person name="White B."/>
            <person name="Blaschek H."/>
            <person name="Richardson P."/>
        </authorList>
    </citation>
    <scope>NUCLEOTIDE SEQUENCE [LARGE SCALE GENOMIC DNA]</scope>
    <source>
        <strain>ATCC 51743 / NCIMB 8052</strain>
    </source>
</reference>
<dbReference type="EC" id="1.3.1.98" evidence="1"/>
<dbReference type="EMBL" id="CP000721">
    <property type="protein sequence ID" value="ABR36964.1"/>
    <property type="molecule type" value="Genomic_DNA"/>
</dbReference>
<dbReference type="RefSeq" id="WP_012061009.1">
    <property type="nucleotide sequence ID" value="NC_009617.1"/>
</dbReference>
<dbReference type="SMR" id="A6M2Y4"/>
<dbReference type="GeneID" id="66347726"/>
<dbReference type="KEGG" id="cbe:Cbei_4858"/>
<dbReference type="eggNOG" id="COG0812">
    <property type="taxonomic scope" value="Bacteria"/>
</dbReference>
<dbReference type="HOGENOM" id="CLU_035304_1_1_9"/>
<dbReference type="UniPathway" id="UPA00219"/>
<dbReference type="Proteomes" id="UP000000565">
    <property type="component" value="Chromosome"/>
</dbReference>
<dbReference type="GO" id="GO:0005829">
    <property type="term" value="C:cytosol"/>
    <property type="evidence" value="ECO:0007669"/>
    <property type="project" value="TreeGrafter"/>
</dbReference>
<dbReference type="GO" id="GO:0071949">
    <property type="term" value="F:FAD binding"/>
    <property type="evidence" value="ECO:0007669"/>
    <property type="project" value="InterPro"/>
</dbReference>
<dbReference type="GO" id="GO:0008762">
    <property type="term" value="F:UDP-N-acetylmuramate dehydrogenase activity"/>
    <property type="evidence" value="ECO:0007669"/>
    <property type="project" value="UniProtKB-UniRule"/>
</dbReference>
<dbReference type="GO" id="GO:0051301">
    <property type="term" value="P:cell division"/>
    <property type="evidence" value="ECO:0007669"/>
    <property type="project" value="UniProtKB-KW"/>
</dbReference>
<dbReference type="GO" id="GO:0071555">
    <property type="term" value="P:cell wall organization"/>
    <property type="evidence" value="ECO:0007669"/>
    <property type="project" value="UniProtKB-KW"/>
</dbReference>
<dbReference type="GO" id="GO:0009252">
    <property type="term" value="P:peptidoglycan biosynthetic process"/>
    <property type="evidence" value="ECO:0007669"/>
    <property type="project" value="UniProtKB-UniRule"/>
</dbReference>
<dbReference type="GO" id="GO:0008360">
    <property type="term" value="P:regulation of cell shape"/>
    <property type="evidence" value="ECO:0007669"/>
    <property type="project" value="UniProtKB-KW"/>
</dbReference>
<dbReference type="Gene3D" id="3.30.465.10">
    <property type="match status" value="1"/>
</dbReference>
<dbReference type="Gene3D" id="3.90.78.10">
    <property type="entry name" value="UDP-N-acetylenolpyruvoylglucosamine reductase, C-terminal domain"/>
    <property type="match status" value="1"/>
</dbReference>
<dbReference type="Gene3D" id="3.30.43.10">
    <property type="entry name" value="Uridine Diphospho-n-acetylenolpyruvylglucosamine Reductase, domain 2"/>
    <property type="match status" value="1"/>
</dbReference>
<dbReference type="HAMAP" id="MF_00037">
    <property type="entry name" value="MurB"/>
    <property type="match status" value="1"/>
</dbReference>
<dbReference type="InterPro" id="IPR016166">
    <property type="entry name" value="FAD-bd_PCMH"/>
</dbReference>
<dbReference type="InterPro" id="IPR036318">
    <property type="entry name" value="FAD-bd_PCMH-like_sf"/>
</dbReference>
<dbReference type="InterPro" id="IPR016167">
    <property type="entry name" value="FAD-bd_PCMH_sub1"/>
</dbReference>
<dbReference type="InterPro" id="IPR016169">
    <property type="entry name" value="FAD-bd_PCMH_sub2"/>
</dbReference>
<dbReference type="InterPro" id="IPR003170">
    <property type="entry name" value="MurB"/>
</dbReference>
<dbReference type="InterPro" id="IPR011601">
    <property type="entry name" value="MurB_C"/>
</dbReference>
<dbReference type="InterPro" id="IPR036635">
    <property type="entry name" value="MurB_C_sf"/>
</dbReference>
<dbReference type="InterPro" id="IPR006094">
    <property type="entry name" value="Oxid_FAD_bind_N"/>
</dbReference>
<dbReference type="NCBIfam" id="TIGR00179">
    <property type="entry name" value="murB"/>
    <property type="match status" value="1"/>
</dbReference>
<dbReference type="NCBIfam" id="NF010480">
    <property type="entry name" value="PRK13905.1"/>
    <property type="match status" value="1"/>
</dbReference>
<dbReference type="PANTHER" id="PTHR21071">
    <property type="entry name" value="UDP-N-ACETYLENOLPYRUVOYLGLUCOSAMINE REDUCTASE"/>
    <property type="match status" value="1"/>
</dbReference>
<dbReference type="PANTHER" id="PTHR21071:SF4">
    <property type="entry name" value="UDP-N-ACETYLENOLPYRUVOYLGLUCOSAMINE REDUCTASE"/>
    <property type="match status" value="1"/>
</dbReference>
<dbReference type="Pfam" id="PF01565">
    <property type="entry name" value="FAD_binding_4"/>
    <property type="match status" value="1"/>
</dbReference>
<dbReference type="Pfam" id="PF02873">
    <property type="entry name" value="MurB_C"/>
    <property type="match status" value="1"/>
</dbReference>
<dbReference type="SUPFAM" id="SSF56176">
    <property type="entry name" value="FAD-binding/transporter-associated domain-like"/>
    <property type="match status" value="1"/>
</dbReference>
<dbReference type="SUPFAM" id="SSF56194">
    <property type="entry name" value="Uridine diphospho-N-Acetylenolpyruvylglucosamine reductase, MurB, C-terminal domain"/>
    <property type="match status" value="1"/>
</dbReference>
<dbReference type="PROSITE" id="PS51387">
    <property type="entry name" value="FAD_PCMH"/>
    <property type="match status" value="1"/>
</dbReference>
<organism>
    <name type="scientific">Clostridium beijerinckii (strain ATCC 51743 / NCIMB 8052)</name>
    <name type="common">Clostridium acetobutylicum</name>
    <dbReference type="NCBI Taxonomy" id="290402"/>
    <lineage>
        <taxon>Bacteria</taxon>
        <taxon>Bacillati</taxon>
        <taxon>Bacillota</taxon>
        <taxon>Clostridia</taxon>
        <taxon>Eubacteriales</taxon>
        <taxon>Clostridiaceae</taxon>
        <taxon>Clostridium</taxon>
    </lineage>
</organism>